<evidence type="ECO:0000255" key="1">
    <source>
        <dbReference type="HAMAP-Rule" id="MF_00611"/>
    </source>
</evidence>
<organism>
    <name type="scientific">Aquifex aeolicus (strain VF5)</name>
    <dbReference type="NCBI Taxonomy" id="224324"/>
    <lineage>
        <taxon>Bacteria</taxon>
        <taxon>Pseudomonadati</taxon>
        <taxon>Aquificota</taxon>
        <taxon>Aquificia</taxon>
        <taxon>Aquificales</taxon>
        <taxon>Aquificaceae</taxon>
        <taxon>Aquifex</taxon>
    </lineage>
</organism>
<comment type="function">
    <text evidence="1">Necessary for formate dehydrogenase activity.</text>
</comment>
<comment type="subcellular location">
    <subcellularLocation>
        <location evidence="1">Cytoplasm</location>
    </subcellularLocation>
</comment>
<comment type="similarity">
    <text evidence="1">Belongs to the FdhE family.</text>
</comment>
<protein>
    <recommendedName>
        <fullName evidence="1">Protein FdhE homolog</fullName>
    </recommendedName>
</protein>
<name>FDHE_AQUAE</name>
<sequence length="283" mass="33169">MWGGEMNIFKQKEREFALNRIPVLKEKFPESNQILNFLSHILEYHNSIISEISDLSISLDNQNIESRLGKGKPALKLSEYDFEPFLKYFYPLLNIVYEHGTPQMKERVEHLQSLEKKEILSLISSFLENGISDDMLRFFLISYLQPILYTFADKVKFEHERWFKNYCPVCGSKPSVSFIMDTEDWEGARFLRCSVCLTDWLYVRTKCVNCGNVEDDSLDYFISSELDYIEIQTCKKCNSYIKIIDLRKDGLAVPDLEDIASVSLDLWAQEQGFIKVERNFMGY</sequence>
<proteinExistence type="inferred from homology"/>
<dbReference type="EMBL" id="AE000657">
    <property type="protein sequence ID" value="AAC07106.1"/>
    <property type="molecule type" value="Genomic_DNA"/>
</dbReference>
<dbReference type="PIR" id="C70390">
    <property type="entry name" value="C70390"/>
</dbReference>
<dbReference type="RefSeq" id="NP_213713.1">
    <property type="nucleotide sequence ID" value="NC_000918.1"/>
</dbReference>
<dbReference type="SMR" id="O67150"/>
<dbReference type="FunCoup" id="O67150">
    <property type="interactions" value="31"/>
</dbReference>
<dbReference type="STRING" id="224324.aq_1051"/>
<dbReference type="EnsemblBacteria" id="AAC07106">
    <property type="protein sequence ID" value="AAC07106"/>
    <property type="gene ID" value="aq_1051"/>
</dbReference>
<dbReference type="KEGG" id="aae:aq_1051"/>
<dbReference type="eggNOG" id="COG3058">
    <property type="taxonomic scope" value="Bacteria"/>
</dbReference>
<dbReference type="HOGENOM" id="CLU_071015_1_0_0"/>
<dbReference type="InParanoid" id="O67150"/>
<dbReference type="OrthoDB" id="9811074at2"/>
<dbReference type="Proteomes" id="UP000000798">
    <property type="component" value="Chromosome"/>
</dbReference>
<dbReference type="GO" id="GO:0005829">
    <property type="term" value="C:cytosol"/>
    <property type="evidence" value="ECO:0000318"/>
    <property type="project" value="GO_Central"/>
</dbReference>
<dbReference type="GO" id="GO:0008199">
    <property type="term" value="F:ferric iron binding"/>
    <property type="evidence" value="ECO:0000318"/>
    <property type="project" value="GO_Central"/>
</dbReference>
<dbReference type="GO" id="GO:0051604">
    <property type="term" value="P:protein maturation"/>
    <property type="evidence" value="ECO:0000318"/>
    <property type="project" value="GO_Central"/>
</dbReference>
<dbReference type="CDD" id="cd16341">
    <property type="entry name" value="FdhE"/>
    <property type="match status" value="1"/>
</dbReference>
<dbReference type="FunFam" id="3.90.1670.10:FF:000001">
    <property type="entry name" value="Protein FdhE"/>
    <property type="match status" value="1"/>
</dbReference>
<dbReference type="Gene3D" id="3.90.1670.10">
    <property type="entry name" value="FdhE-like domain"/>
    <property type="match status" value="1"/>
</dbReference>
<dbReference type="HAMAP" id="MF_00611">
    <property type="entry name" value="FdeH"/>
    <property type="match status" value="1"/>
</dbReference>
<dbReference type="InterPro" id="IPR024064">
    <property type="entry name" value="FdhE-like_sf"/>
</dbReference>
<dbReference type="InterPro" id="IPR056796">
    <property type="entry name" value="FdhE_C"/>
</dbReference>
<dbReference type="InterPro" id="IPR056797">
    <property type="entry name" value="FdhE_central"/>
</dbReference>
<dbReference type="InterPro" id="IPR006452">
    <property type="entry name" value="Formate_DH_accessory"/>
</dbReference>
<dbReference type="PANTHER" id="PTHR37689">
    <property type="entry name" value="PROTEIN FDHE"/>
    <property type="match status" value="1"/>
</dbReference>
<dbReference type="PANTHER" id="PTHR37689:SF1">
    <property type="entry name" value="PROTEIN FDHE"/>
    <property type="match status" value="1"/>
</dbReference>
<dbReference type="Pfam" id="PF24860">
    <property type="entry name" value="FdhE_C"/>
    <property type="match status" value="1"/>
</dbReference>
<dbReference type="Pfam" id="PF24859">
    <property type="entry name" value="FdhE_central"/>
    <property type="match status" value="1"/>
</dbReference>
<dbReference type="PIRSF" id="PIRSF018296">
    <property type="entry name" value="Format_dh_formtn"/>
    <property type="match status" value="1"/>
</dbReference>
<dbReference type="SUPFAM" id="SSF144020">
    <property type="entry name" value="FdhE-like"/>
    <property type="match status" value="1"/>
</dbReference>
<feature type="chain" id="PRO_0000189637" description="Protein FdhE homolog">
    <location>
        <begin position="1"/>
        <end position="283"/>
    </location>
</feature>
<keyword id="KW-0963">Cytoplasm</keyword>
<keyword id="KW-1185">Reference proteome</keyword>
<gene>
    <name evidence="1" type="primary">fdhE</name>
    <name type="ordered locus">aq_1051</name>
</gene>
<reference key="1">
    <citation type="journal article" date="1998" name="Nature">
        <title>The complete genome of the hyperthermophilic bacterium Aquifex aeolicus.</title>
        <authorList>
            <person name="Deckert G."/>
            <person name="Warren P.V."/>
            <person name="Gaasterland T."/>
            <person name="Young W.G."/>
            <person name="Lenox A.L."/>
            <person name="Graham D.E."/>
            <person name="Overbeek R."/>
            <person name="Snead M.A."/>
            <person name="Keller M."/>
            <person name="Aujay M."/>
            <person name="Huber R."/>
            <person name="Feldman R.A."/>
            <person name="Short J.M."/>
            <person name="Olsen G.J."/>
            <person name="Swanson R.V."/>
        </authorList>
    </citation>
    <scope>NUCLEOTIDE SEQUENCE [LARGE SCALE GENOMIC DNA]</scope>
    <source>
        <strain>VF5</strain>
    </source>
</reference>
<accession>O67150</accession>